<evidence type="ECO:0000255" key="1">
    <source>
        <dbReference type="HAMAP-Rule" id="MF_00970"/>
    </source>
</evidence>
<evidence type="ECO:0000256" key="2">
    <source>
        <dbReference type="SAM" id="MobiDB-lite"/>
    </source>
</evidence>
<gene>
    <name evidence="1" type="primary">rne</name>
    <name type="ordered locus">BU347</name>
</gene>
<feature type="chain" id="PRO_0000097370" description="Ribonuclease E">
    <location>
        <begin position="1"/>
        <end position="902"/>
    </location>
</feature>
<feature type="domain" description="S1 motif" evidence="1">
    <location>
        <begin position="39"/>
        <end position="119"/>
    </location>
</feature>
<feature type="region of interest" description="Required for zinc-mediated homotetramerization and catalytic activity" evidence="1">
    <location>
        <begin position="404"/>
        <end position="407"/>
    </location>
</feature>
<feature type="region of interest" description="Disordered" evidence="2">
    <location>
        <begin position="881"/>
        <end position="902"/>
    </location>
</feature>
<feature type="compositionally biased region" description="Polar residues" evidence="2">
    <location>
        <begin position="889"/>
        <end position="902"/>
    </location>
</feature>
<feature type="binding site" evidence="1">
    <location>
        <position position="303"/>
    </location>
    <ligand>
        <name>Mg(2+)</name>
        <dbReference type="ChEBI" id="CHEBI:18420"/>
        <note>catalytic</note>
    </ligand>
</feature>
<feature type="binding site" evidence="1">
    <location>
        <position position="346"/>
    </location>
    <ligand>
        <name>Mg(2+)</name>
        <dbReference type="ChEBI" id="CHEBI:18420"/>
        <note>catalytic</note>
    </ligand>
</feature>
<feature type="binding site" evidence="1">
    <location>
        <position position="404"/>
    </location>
    <ligand>
        <name>Zn(2+)</name>
        <dbReference type="ChEBI" id="CHEBI:29105"/>
        <note>ligand shared between dimeric partners</note>
    </ligand>
</feature>
<feature type="binding site" evidence="1">
    <location>
        <position position="407"/>
    </location>
    <ligand>
        <name>Zn(2+)</name>
        <dbReference type="ChEBI" id="CHEBI:29105"/>
        <note>ligand shared between dimeric partners</note>
    </ligand>
</feature>
<comment type="function">
    <text evidence="1">Endoribonuclease that plays a central role in RNA processing and decay. Required for the maturation of 5S and 16S rRNAs and the majority of tRNAs. Also involved in the degradation of most mRNAs.</text>
</comment>
<comment type="catalytic activity">
    <reaction evidence="1">
        <text>Endonucleolytic cleavage of single-stranded RNA in A- and U-rich regions.</text>
        <dbReference type="EC" id="3.1.26.12"/>
    </reaction>
</comment>
<comment type="cofactor">
    <cofactor evidence="1">
        <name>Zn(2+)</name>
        <dbReference type="ChEBI" id="CHEBI:29105"/>
    </cofactor>
    <text evidence="1">Binds 2 Zn(2+) ions per homotetramer.</text>
</comment>
<comment type="cofactor">
    <cofactor evidence="1">
        <name>Mg(2+)</name>
        <dbReference type="ChEBI" id="CHEBI:18420"/>
    </cofactor>
    <text evidence="1">Binds 1 Mg(2+) ion per subunit.</text>
</comment>
<comment type="subunit">
    <text evidence="1">Component of the RNA degradosome, which is a multiprotein complex involved in RNA processing and mRNA degradation. Within the RNA degradosome, RNase E assembles into a homotetramer formed by a dimer of dimers.</text>
</comment>
<comment type="subcellular location">
    <subcellularLocation>
        <location evidence="1">Cytoplasm</location>
    </subcellularLocation>
    <subcellularLocation>
        <location evidence="1">Cell inner membrane</location>
        <topology evidence="1">Peripheral membrane protein</topology>
        <orientation evidence="1">Cytoplasmic side</orientation>
    </subcellularLocation>
</comment>
<comment type="similarity">
    <text evidence="1">Belongs to the RNase E/G family. RNase E subfamily.</text>
</comment>
<protein>
    <recommendedName>
        <fullName evidence="1">Ribonuclease E</fullName>
        <shortName evidence="1">RNase E</shortName>
        <ecNumber evidence="1">3.1.26.12</ecNumber>
    </recommendedName>
</protein>
<organism>
    <name type="scientific">Buchnera aphidicola subsp. Acyrthosiphon pisum (strain APS)</name>
    <name type="common">Acyrthosiphon pisum symbiotic bacterium</name>
    <dbReference type="NCBI Taxonomy" id="107806"/>
    <lineage>
        <taxon>Bacteria</taxon>
        <taxon>Pseudomonadati</taxon>
        <taxon>Pseudomonadota</taxon>
        <taxon>Gammaproteobacteria</taxon>
        <taxon>Enterobacterales</taxon>
        <taxon>Erwiniaceae</taxon>
        <taxon>Buchnera</taxon>
    </lineage>
</organism>
<sequence length="902" mass="104007">MKRMLINATQQEELRVALVDGQRLYDLDIEHSGSEQKKSNIYKGKITRIEPSLEAAFVDYGEEKNGFLPLKEISKNYFPENHIETLGFNIKNVLQEGQEVIVQISKEERGTKGAALTTFISLAGSYLVLMPNSPKSGGISRRIEGNDRIALKELLTLLELPEEMSLIIRTAGAGKSIESLRWDLSLRLQHWKTIQIIAKSRTAPFLIHQESNIIVRAFRDYLRQDIGEILIDNPKILDLARKHITFLGRPDFVNKIKLYSGEVPLFSYFQIETQINSAFQRKVRLPSGGSIMVDSTEALTAIDINSSRSTSGTDIASTAFNTNLEAVDEISRQLRLRDLGGLIVIDFIDMSAISHQRAIENRLREIARDDRARIQIGQISRFGLLEMSRQRLSSSLGESSHHICPRCTGTGTIRDNESLSLSILRLIEEEALKENTYEVRAIVPVEIACYLLNEKRDAVHAIEKRQAGGKTIIVPSKKMKTPHYSVSRIRKSESKNYTRYGLSNIRQSKITSFLKKNLLKKKQKEILDVANFNFYDNCYNKIQEAQENILKKNNYNNILLKVLSNNRNFIFKMITWFKNSFFIKNMLITSDIFKKNTLKNTNNIFFKKKYSSLNKKNNNQKKRVILSKLFEANIENIPLKNKKLDTSSANYLYDNIERKKNITKKNDLIQKNIHENSYLKHVLMNRYNVINIINNNYIFYKIFNRTKIFKNQNTNNSFLKFSSVTSPIFIFSSVFSLELALGKVWIKYPIAILDETKKQKKLNRKQILHISSISETNTIVNKNNYSGIKKIKHETYSFKKYVKNNIQNQEVTQSQLIKRTKKRNVFILDKKNFLYKRTCNRKNKIHQSSAPITKISKQSDLNKKEKEFHYNLSMMKSSLRGKNSAGVHSATNFSNSPVSKLK</sequence>
<keyword id="KW-0997">Cell inner membrane</keyword>
<keyword id="KW-1003">Cell membrane</keyword>
<keyword id="KW-0963">Cytoplasm</keyword>
<keyword id="KW-0255">Endonuclease</keyword>
<keyword id="KW-0378">Hydrolase</keyword>
<keyword id="KW-0460">Magnesium</keyword>
<keyword id="KW-0472">Membrane</keyword>
<keyword id="KW-0479">Metal-binding</keyword>
<keyword id="KW-0540">Nuclease</keyword>
<keyword id="KW-1185">Reference proteome</keyword>
<keyword id="KW-0694">RNA-binding</keyword>
<keyword id="KW-0698">rRNA processing</keyword>
<keyword id="KW-0699">rRNA-binding</keyword>
<keyword id="KW-0819">tRNA processing</keyword>
<keyword id="KW-0820">tRNA-binding</keyword>
<keyword id="KW-0862">Zinc</keyword>
<proteinExistence type="inferred from homology"/>
<name>RNE_BUCAI</name>
<reference key="1">
    <citation type="journal article" date="2000" name="Nature">
        <title>Genome sequence of the endocellular bacterial symbiont of aphids Buchnera sp. APS.</title>
        <authorList>
            <person name="Shigenobu S."/>
            <person name="Watanabe H."/>
            <person name="Hattori M."/>
            <person name="Sakaki Y."/>
            <person name="Ishikawa H."/>
        </authorList>
    </citation>
    <scope>NUCLEOTIDE SEQUENCE [LARGE SCALE GENOMIC DNA]</scope>
    <source>
        <strain>APS</strain>
    </source>
</reference>
<dbReference type="EC" id="3.1.26.12" evidence="1"/>
<dbReference type="EMBL" id="BA000003">
    <property type="protein sequence ID" value="BAB13052.1"/>
    <property type="molecule type" value="Genomic_DNA"/>
</dbReference>
<dbReference type="RefSeq" id="NP_240166.1">
    <property type="nucleotide sequence ID" value="NC_002528.1"/>
</dbReference>
<dbReference type="RefSeq" id="WP_010896079.1">
    <property type="nucleotide sequence ID" value="NC_002528.1"/>
</dbReference>
<dbReference type="SMR" id="P57429"/>
<dbReference type="STRING" id="563178.BUAP5A_341"/>
<dbReference type="EnsemblBacteria" id="BAB13052">
    <property type="protein sequence ID" value="BAB13052"/>
    <property type="gene ID" value="BAB13052"/>
</dbReference>
<dbReference type="KEGG" id="buc:BU347"/>
<dbReference type="PATRIC" id="fig|107806.10.peg.359"/>
<dbReference type="eggNOG" id="COG1530">
    <property type="taxonomic scope" value="Bacteria"/>
</dbReference>
<dbReference type="HOGENOM" id="CLU_003468_5_4_6"/>
<dbReference type="Proteomes" id="UP000001806">
    <property type="component" value="Chromosome"/>
</dbReference>
<dbReference type="GO" id="GO:0005737">
    <property type="term" value="C:cytoplasm"/>
    <property type="evidence" value="ECO:0007669"/>
    <property type="project" value="UniProtKB-SubCell"/>
</dbReference>
<dbReference type="GO" id="GO:0009898">
    <property type="term" value="C:cytoplasmic side of plasma membrane"/>
    <property type="evidence" value="ECO:0007669"/>
    <property type="project" value="UniProtKB-UniRule"/>
</dbReference>
<dbReference type="GO" id="GO:0000287">
    <property type="term" value="F:magnesium ion binding"/>
    <property type="evidence" value="ECO:0007669"/>
    <property type="project" value="UniProtKB-UniRule"/>
</dbReference>
<dbReference type="GO" id="GO:0008995">
    <property type="term" value="F:ribonuclease E activity"/>
    <property type="evidence" value="ECO:0007669"/>
    <property type="project" value="InterPro"/>
</dbReference>
<dbReference type="GO" id="GO:0004521">
    <property type="term" value="F:RNA endonuclease activity"/>
    <property type="evidence" value="ECO:0007669"/>
    <property type="project" value="UniProtKB-UniRule"/>
</dbReference>
<dbReference type="GO" id="GO:0019843">
    <property type="term" value="F:rRNA binding"/>
    <property type="evidence" value="ECO:0007669"/>
    <property type="project" value="UniProtKB-KW"/>
</dbReference>
<dbReference type="GO" id="GO:0000049">
    <property type="term" value="F:tRNA binding"/>
    <property type="evidence" value="ECO:0007669"/>
    <property type="project" value="UniProtKB-KW"/>
</dbReference>
<dbReference type="GO" id="GO:0008270">
    <property type="term" value="F:zinc ion binding"/>
    <property type="evidence" value="ECO:0007669"/>
    <property type="project" value="UniProtKB-UniRule"/>
</dbReference>
<dbReference type="GO" id="GO:0006402">
    <property type="term" value="P:mRNA catabolic process"/>
    <property type="evidence" value="ECO:0007669"/>
    <property type="project" value="UniProtKB-UniRule"/>
</dbReference>
<dbReference type="GO" id="GO:0006364">
    <property type="term" value="P:rRNA processing"/>
    <property type="evidence" value="ECO:0007669"/>
    <property type="project" value="UniProtKB-UniRule"/>
</dbReference>
<dbReference type="GO" id="GO:0008033">
    <property type="term" value="P:tRNA processing"/>
    <property type="evidence" value="ECO:0007669"/>
    <property type="project" value="UniProtKB-UniRule"/>
</dbReference>
<dbReference type="CDD" id="cd04453">
    <property type="entry name" value="S1_RNase_E"/>
    <property type="match status" value="1"/>
</dbReference>
<dbReference type="FunFam" id="2.40.50.140:FF:000040">
    <property type="entry name" value="Ribonuclease E"/>
    <property type="match status" value="1"/>
</dbReference>
<dbReference type="Gene3D" id="2.40.50.140">
    <property type="entry name" value="Nucleic acid-binding proteins"/>
    <property type="match status" value="1"/>
</dbReference>
<dbReference type="Gene3D" id="3.40.1260.20">
    <property type="entry name" value="Ribonuclease E, catalytic domain"/>
    <property type="match status" value="1"/>
</dbReference>
<dbReference type="HAMAP" id="MF_00970">
    <property type="entry name" value="RNase_E"/>
    <property type="match status" value="1"/>
</dbReference>
<dbReference type="InterPro" id="IPR012340">
    <property type="entry name" value="NA-bd_OB-fold"/>
</dbReference>
<dbReference type="InterPro" id="IPR019307">
    <property type="entry name" value="RNA-bd_AU-1/RNase_E/G"/>
</dbReference>
<dbReference type="InterPro" id="IPR028878">
    <property type="entry name" value="RNase_E"/>
</dbReference>
<dbReference type="InterPro" id="IPR004659">
    <property type="entry name" value="RNase_E/G"/>
</dbReference>
<dbReference type="InterPro" id="IPR048583">
    <property type="entry name" value="RNase_E_G_thioredoxin-like"/>
</dbReference>
<dbReference type="InterPro" id="IPR003029">
    <property type="entry name" value="S1_domain"/>
</dbReference>
<dbReference type="NCBIfam" id="NF008074">
    <property type="entry name" value="PRK10811.1"/>
    <property type="match status" value="1"/>
</dbReference>
<dbReference type="NCBIfam" id="TIGR00757">
    <property type="entry name" value="RNaseEG"/>
    <property type="match status" value="1"/>
</dbReference>
<dbReference type="PANTHER" id="PTHR30001">
    <property type="entry name" value="RIBONUCLEASE"/>
    <property type="match status" value="1"/>
</dbReference>
<dbReference type="PANTHER" id="PTHR30001:SF1">
    <property type="entry name" value="RIBONUCLEASE E_G-LIKE PROTEIN, CHLOROPLASTIC"/>
    <property type="match status" value="1"/>
</dbReference>
<dbReference type="Pfam" id="PF10150">
    <property type="entry name" value="RNase_E_G"/>
    <property type="match status" value="1"/>
</dbReference>
<dbReference type="Pfam" id="PF20833">
    <property type="entry name" value="RNase_E_G_Thio"/>
    <property type="match status" value="1"/>
</dbReference>
<dbReference type="Pfam" id="PF00575">
    <property type="entry name" value="S1"/>
    <property type="match status" value="1"/>
</dbReference>
<dbReference type="SMART" id="SM00316">
    <property type="entry name" value="S1"/>
    <property type="match status" value="1"/>
</dbReference>
<dbReference type="SUPFAM" id="SSF50249">
    <property type="entry name" value="Nucleic acid-binding proteins"/>
    <property type="match status" value="1"/>
</dbReference>
<dbReference type="PROSITE" id="PS50126">
    <property type="entry name" value="S1"/>
    <property type="match status" value="1"/>
</dbReference>
<accession>P57429</accession>